<protein>
    <recommendedName>
        <fullName>Myoglobin</fullName>
    </recommendedName>
    <alternativeName>
        <fullName evidence="1">Nitrite reductase MB</fullName>
        <ecNumber evidence="1">1.7.-.-</ecNumber>
    </alternativeName>
    <alternativeName>
        <fullName evidence="1">Pseudoperoxidase MB</fullName>
        <ecNumber evidence="1">1.11.1.-</ecNumber>
    </alternativeName>
</protein>
<evidence type="ECO:0000250" key="1">
    <source>
        <dbReference type="UniProtKB" id="P02144"/>
    </source>
</evidence>
<evidence type="ECO:0000250" key="2">
    <source>
        <dbReference type="UniProtKB" id="P02185"/>
    </source>
</evidence>
<evidence type="ECO:0000250" key="3">
    <source>
        <dbReference type="UniProtKB" id="P02189"/>
    </source>
</evidence>
<evidence type="ECO:0000250" key="4">
    <source>
        <dbReference type="UniProtKB" id="P04247"/>
    </source>
</evidence>
<evidence type="ECO:0000250" key="5">
    <source>
        <dbReference type="UniProtKB" id="P68082"/>
    </source>
</evidence>
<evidence type="ECO:0000250" key="6">
    <source>
        <dbReference type="UniProtKB" id="Q9QZ76"/>
    </source>
</evidence>
<evidence type="ECO:0000255" key="7">
    <source>
        <dbReference type="PROSITE-ProRule" id="PRU00238"/>
    </source>
</evidence>
<evidence type="ECO:0000269" key="8">
    <source>
    </source>
</evidence>
<dbReference type="EC" id="1.7.-.-" evidence="1"/>
<dbReference type="EC" id="1.11.1.-" evidence="1"/>
<dbReference type="PIR" id="C90587">
    <property type="entry name" value="MYMQS"/>
</dbReference>
<dbReference type="SMR" id="P02155"/>
<dbReference type="GO" id="GO:0070062">
    <property type="term" value="C:extracellular exosome"/>
    <property type="evidence" value="ECO:0007669"/>
    <property type="project" value="TreeGrafter"/>
</dbReference>
<dbReference type="GO" id="GO:0016528">
    <property type="term" value="C:sarcoplasm"/>
    <property type="evidence" value="ECO:0000250"/>
    <property type="project" value="UniProtKB"/>
</dbReference>
<dbReference type="GO" id="GO:0020037">
    <property type="term" value="F:heme binding"/>
    <property type="evidence" value="ECO:0007669"/>
    <property type="project" value="InterPro"/>
</dbReference>
<dbReference type="GO" id="GO:0046872">
    <property type="term" value="F:metal ion binding"/>
    <property type="evidence" value="ECO:0007669"/>
    <property type="project" value="UniProtKB-KW"/>
</dbReference>
<dbReference type="GO" id="GO:0098809">
    <property type="term" value="F:nitrite reductase activity"/>
    <property type="evidence" value="ECO:0000250"/>
    <property type="project" value="UniProtKB"/>
</dbReference>
<dbReference type="GO" id="GO:0019825">
    <property type="term" value="F:oxygen binding"/>
    <property type="evidence" value="ECO:0007669"/>
    <property type="project" value="InterPro"/>
</dbReference>
<dbReference type="GO" id="GO:0005344">
    <property type="term" value="F:oxygen carrier activity"/>
    <property type="evidence" value="ECO:0000250"/>
    <property type="project" value="UniProtKB"/>
</dbReference>
<dbReference type="GO" id="GO:0004601">
    <property type="term" value="F:peroxidase activity"/>
    <property type="evidence" value="ECO:0000250"/>
    <property type="project" value="UniProtKB"/>
</dbReference>
<dbReference type="GO" id="GO:0019430">
    <property type="term" value="P:removal of superoxide radicals"/>
    <property type="evidence" value="ECO:0000250"/>
    <property type="project" value="UniProtKB"/>
</dbReference>
<dbReference type="Gene3D" id="6.10.140.2100">
    <property type="match status" value="1"/>
</dbReference>
<dbReference type="Gene3D" id="6.10.140.2110">
    <property type="match status" value="1"/>
</dbReference>
<dbReference type="InterPro" id="IPR000971">
    <property type="entry name" value="Globin"/>
</dbReference>
<dbReference type="InterPro" id="IPR009050">
    <property type="entry name" value="Globin-like_sf"/>
</dbReference>
<dbReference type="InterPro" id="IPR002335">
    <property type="entry name" value="Myoglobin"/>
</dbReference>
<dbReference type="PANTHER" id="PTHR47132">
    <property type="entry name" value="MYOGLOBIN"/>
    <property type="match status" value="1"/>
</dbReference>
<dbReference type="PANTHER" id="PTHR47132:SF1">
    <property type="entry name" value="MYOGLOBIN"/>
    <property type="match status" value="1"/>
</dbReference>
<dbReference type="Pfam" id="PF00042">
    <property type="entry name" value="Globin"/>
    <property type="match status" value="1"/>
</dbReference>
<dbReference type="PRINTS" id="PR00613">
    <property type="entry name" value="MYOGLOBIN"/>
</dbReference>
<dbReference type="SUPFAM" id="SSF46458">
    <property type="entry name" value="Globin-like"/>
    <property type="match status" value="1"/>
</dbReference>
<dbReference type="PROSITE" id="PS01033">
    <property type="entry name" value="GLOBIN"/>
    <property type="match status" value="1"/>
</dbReference>
<accession>P02155</accession>
<organism>
    <name type="scientific">Saimiri sciureus</name>
    <name type="common">Common squirrel monkey</name>
    <dbReference type="NCBI Taxonomy" id="9521"/>
    <lineage>
        <taxon>Eukaryota</taxon>
        <taxon>Metazoa</taxon>
        <taxon>Chordata</taxon>
        <taxon>Craniata</taxon>
        <taxon>Vertebrata</taxon>
        <taxon>Euteleostomi</taxon>
        <taxon>Mammalia</taxon>
        <taxon>Eutheria</taxon>
        <taxon>Euarchontoglires</taxon>
        <taxon>Primates</taxon>
        <taxon>Haplorrhini</taxon>
        <taxon>Platyrrhini</taxon>
        <taxon>Cebidae</taxon>
        <taxon>Saimiriinae</taxon>
        <taxon>Saimiri</taxon>
    </lineage>
</organism>
<comment type="function">
    <text evidence="1">Monomeric heme protein which primary function is to store oxygen and facilitate its diffusion within muscle tissues. Reversibly binds oxygen through a pentacoordinated heme iron and enables its timely and efficient release as needed during periods of heightened demand. Depending on the oxidative conditions of tissues and cells, and in addition to its ability to bind oxygen, it also has a nitrite reductase activity whereby it regulates the production of bioactive nitric oxide. Under stress conditions, like hypoxia and anoxia, it also protects cells against reactive oxygen species thanks to its pseudoperoxidase activity.</text>
</comment>
<comment type="catalytic activity">
    <reaction evidence="1">
        <text>Fe(III)-heme b-[protein] + nitric oxide + H2O = Fe(II)-heme b-[protein] + nitrite + 2 H(+)</text>
        <dbReference type="Rhea" id="RHEA:77711"/>
        <dbReference type="Rhea" id="RHEA-COMP:18975"/>
        <dbReference type="Rhea" id="RHEA-COMP:18976"/>
        <dbReference type="ChEBI" id="CHEBI:15377"/>
        <dbReference type="ChEBI" id="CHEBI:15378"/>
        <dbReference type="ChEBI" id="CHEBI:16301"/>
        <dbReference type="ChEBI" id="CHEBI:16480"/>
        <dbReference type="ChEBI" id="CHEBI:55376"/>
        <dbReference type="ChEBI" id="CHEBI:60344"/>
    </reaction>
    <physiologicalReaction direction="right-to-left" evidence="1">
        <dbReference type="Rhea" id="RHEA:77713"/>
    </physiologicalReaction>
</comment>
<comment type="catalytic activity">
    <reaction evidence="1">
        <text>H2O2 + AH2 = A + 2 H2O</text>
        <dbReference type="Rhea" id="RHEA:30275"/>
        <dbReference type="ChEBI" id="CHEBI:13193"/>
        <dbReference type="ChEBI" id="CHEBI:15377"/>
        <dbReference type="ChEBI" id="CHEBI:16240"/>
        <dbReference type="ChEBI" id="CHEBI:17499"/>
    </reaction>
</comment>
<comment type="subunit">
    <text evidence="2">Monomeric.</text>
</comment>
<comment type="subcellular location">
    <subcellularLocation>
        <location evidence="1">Cytoplasm</location>
        <location evidence="1">Sarcoplasm</location>
    </subcellularLocation>
</comment>
<comment type="miscellaneous">
    <text>Marmoset, woolly monkey, and squirrel monkey have a minor myoglobin component that appears to differ from each major component in having Phe-Lys preceding position 1.</text>
</comment>
<comment type="similarity">
    <text evidence="7">Belongs to the globin family.</text>
</comment>
<reference key="1">
    <citation type="journal article" date="1973" name="Biochim. Biophys. Acta">
        <title>The myoglobin of primates. 4. New World monkeys: Cebidae: (1) Saimiri sciureus (squirrel monkey); (2) Lagothrix lagothricha (Humboldt's woolly monkey). Callitrichidae: Callithrix jacchus (common marmoset).</title>
        <authorList>
            <person name="Romero-Herrera A.E."/>
            <person name="Lehmann H."/>
        </authorList>
    </citation>
    <scope>PROTEIN SEQUENCE OF 2-154</scope>
    <source>
        <tissue>Skeletal muscle</tissue>
    </source>
</reference>
<reference key="2">
    <citation type="journal article" date="1973" name="FEBS Lett.">
        <title>N-terminal chain elongation as evidence for duplication of myoglobin in three South American monkeys.</title>
        <authorList>
            <person name="Romero-Herrera A.E."/>
            <person name="Lehmann H."/>
        </authorList>
    </citation>
    <scope>PARTIAL PROTEIN SEQUENCE (MINOR COMPONENT)</scope>
</reference>
<feature type="initiator methionine" description="Removed" evidence="8">
    <location>
        <position position="1"/>
    </location>
</feature>
<feature type="chain" id="PRO_0000053343" description="Myoglobin">
    <location>
        <begin position="2"/>
        <end position="154"/>
    </location>
</feature>
<feature type="domain" description="Globin" evidence="7">
    <location>
        <begin position="2"/>
        <end position="148"/>
    </location>
</feature>
<feature type="binding site" evidence="5">
    <location>
        <position position="65"/>
    </location>
    <ligand>
        <name>nitrite</name>
        <dbReference type="ChEBI" id="CHEBI:16301"/>
    </ligand>
</feature>
<feature type="binding site" evidence="3 7">
    <location>
        <position position="65"/>
    </location>
    <ligand>
        <name>O2</name>
        <dbReference type="ChEBI" id="CHEBI:15379"/>
    </ligand>
</feature>
<feature type="binding site" description="proximal binding residue" evidence="1">
    <location>
        <position position="94"/>
    </location>
    <ligand>
        <name>heme b</name>
        <dbReference type="ChEBI" id="CHEBI:60344"/>
    </ligand>
    <ligandPart>
        <name>Fe</name>
        <dbReference type="ChEBI" id="CHEBI:18248"/>
    </ligandPart>
</feature>
<feature type="modified residue" description="Phosphoserine" evidence="6">
    <location>
        <position position="4"/>
    </location>
</feature>
<feature type="modified residue" description="Phosphothreonine" evidence="4">
    <location>
        <position position="68"/>
    </location>
</feature>
<feature type="sequence variant" description="In minor component.">
    <original>G</original>
    <variation>FKG</variation>
    <location>
        <position position="2"/>
    </location>
</feature>
<sequence>MGLSDGEWQLVLNIWGKVEADIPSHGQEVLISLFKGHPETLEKFDKFKHLKSEDEMKASEELKKHGTTVLTALGGILKKKGQHEAELKPLAQSHATKHKIPVKYLELISDAIVHVLQKKHPGDFGADAQGAMKKALELFRNDMAAKYKELGFQG</sequence>
<name>MYG_SAISC</name>
<proteinExistence type="evidence at protein level"/>
<gene>
    <name type="primary">MB</name>
</gene>
<keyword id="KW-0963">Cytoplasm</keyword>
<keyword id="KW-0903">Direct protein sequencing</keyword>
<keyword id="KW-0349">Heme</keyword>
<keyword id="KW-0408">Iron</keyword>
<keyword id="KW-0479">Metal-binding</keyword>
<keyword id="KW-0514">Muscle protein</keyword>
<keyword id="KW-0560">Oxidoreductase</keyword>
<keyword id="KW-0561">Oxygen transport</keyword>
<keyword id="KW-0597">Phosphoprotein</keyword>
<keyword id="KW-0813">Transport</keyword>